<feature type="chain" id="PRO_0000216135" description="UPF0336 protein Mb0656">
    <location>
        <begin position="1"/>
        <end position="166"/>
    </location>
</feature>
<protein>
    <recommendedName>
        <fullName evidence="1">UPF0336 protein Mb0656</fullName>
    </recommendedName>
</protein>
<comment type="similarity">
    <text evidence="1">Belongs to the UPF0336 family.</text>
</comment>
<name>Y656_MYCBO</name>
<proteinExistence type="inferred from homology"/>
<keyword id="KW-1185">Reference proteome</keyword>
<organism>
    <name type="scientific">Mycobacterium bovis (strain ATCC BAA-935 / AF2122/97)</name>
    <dbReference type="NCBI Taxonomy" id="233413"/>
    <lineage>
        <taxon>Bacteria</taxon>
        <taxon>Bacillati</taxon>
        <taxon>Actinomycetota</taxon>
        <taxon>Actinomycetes</taxon>
        <taxon>Mycobacteriales</taxon>
        <taxon>Mycobacteriaceae</taxon>
        <taxon>Mycobacterium</taxon>
        <taxon>Mycobacterium tuberculosis complex</taxon>
    </lineage>
</organism>
<sequence>MALKTDIRGMIWRYPDYFIVGREQCREFARAVKCDHPAFFSEEAAADLGYDALVAPLTFVTILAKYVQLDFFRHVDVGMETMQIVQVDQRFVFHKPVLAGDKLWARMDIHSVDERFGADIVVTRNLCTNDDGELVMEAYTTLMGQQGDGSARLKWDKESGQVIRTA</sequence>
<accession>Q7U1K2</accession>
<accession>A0A1R3XW31</accession>
<accession>X2BFQ7</accession>
<gene>
    <name type="ordered locus">BQ2027_MB0656</name>
</gene>
<reference key="1">
    <citation type="journal article" date="2003" name="Proc. Natl. Acad. Sci. U.S.A.">
        <title>The complete genome sequence of Mycobacterium bovis.</title>
        <authorList>
            <person name="Garnier T."/>
            <person name="Eiglmeier K."/>
            <person name="Camus J.-C."/>
            <person name="Medina N."/>
            <person name="Mansoor H."/>
            <person name="Pryor M."/>
            <person name="Duthoy S."/>
            <person name="Grondin S."/>
            <person name="Lacroix C."/>
            <person name="Monsempe C."/>
            <person name="Simon S."/>
            <person name="Harris B."/>
            <person name="Atkin R."/>
            <person name="Doggett J."/>
            <person name="Mayes R."/>
            <person name="Keating L."/>
            <person name="Wheeler P.R."/>
            <person name="Parkhill J."/>
            <person name="Barrell B.G."/>
            <person name="Cole S.T."/>
            <person name="Gordon S.V."/>
            <person name="Hewinson R.G."/>
        </authorList>
    </citation>
    <scope>NUCLEOTIDE SEQUENCE [LARGE SCALE GENOMIC DNA]</scope>
    <source>
        <strain>ATCC BAA-935 / AF2122/97</strain>
    </source>
</reference>
<reference key="2">
    <citation type="journal article" date="2017" name="Genome Announc.">
        <title>Updated reference genome sequence and annotation of Mycobacterium bovis AF2122/97.</title>
        <authorList>
            <person name="Malone K.M."/>
            <person name="Farrell D."/>
            <person name="Stuber T.P."/>
            <person name="Schubert O.T."/>
            <person name="Aebersold R."/>
            <person name="Robbe-Austerman S."/>
            <person name="Gordon S.V."/>
        </authorList>
    </citation>
    <scope>NUCLEOTIDE SEQUENCE [LARGE SCALE GENOMIC DNA]</scope>
    <scope>GENOME REANNOTATION</scope>
    <source>
        <strain>ATCC BAA-935 / AF2122/97</strain>
    </source>
</reference>
<dbReference type="EMBL" id="LT708304">
    <property type="protein sequence ID" value="SIT99254.1"/>
    <property type="molecule type" value="Genomic_DNA"/>
</dbReference>
<dbReference type="RefSeq" id="NP_854314.1">
    <property type="nucleotide sequence ID" value="NC_002945.3"/>
</dbReference>
<dbReference type="SMR" id="Q7U1K2"/>
<dbReference type="KEGG" id="mbo:BQ2027_MB0656"/>
<dbReference type="PATRIC" id="fig|233413.5.peg.716"/>
<dbReference type="Proteomes" id="UP000001419">
    <property type="component" value="Chromosome"/>
</dbReference>
<dbReference type="GO" id="GO:0019171">
    <property type="term" value="F:(3R)-hydroxyacyl-[acyl-carrier-protein] dehydratase activity"/>
    <property type="evidence" value="ECO:0007669"/>
    <property type="project" value="TreeGrafter"/>
</dbReference>
<dbReference type="GO" id="GO:0006633">
    <property type="term" value="P:fatty acid biosynthetic process"/>
    <property type="evidence" value="ECO:0007669"/>
    <property type="project" value="TreeGrafter"/>
</dbReference>
<dbReference type="CDD" id="cd03441">
    <property type="entry name" value="R_hydratase_like"/>
    <property type="match status" value="1"/>
</dbReference>
<dbReference type="Gene3D" id="3.10.129.10">
    <property type="entry name" value="Hotdog Thioesterase"/>
    <property type="match status" value="1"/>
</dbReference>
<dbReference type="HAMAP" id="MF_00799">
    <property type="entry name" value="UPF0336"/>
    <property type="match status" value="1"/>
</dbReference>
<dbReference type="InterPro" id="IPR039569">
    <property type="entry name" value="FAS1-like_DH_region"/>
</dbReference>
<dbReference type="InterPro" id="IPR016709">
    <property type="entry name" value="HadA-like"/>
</dbReference>
<dbReference type="InterPro" id="IPR029069">
    <property type="entry name" value="HotDog_dom_sf"/>
</dbReference>
<dbReference type="InterPro" id="IPR050965">
    <property type="entry name" value="UPF0336/Enoyl-CoA_hydratase"/>
</dbReference>
<dbReference type="NCBIfam" id="NF010244">
    <property type="entry name" value="PRK13691.1"/>
    <property type="match status" value="1"/>
</dbReference>
<dbReference type="PANTHER" id="PTHR43437:SF3">
    <property type="entry name" value="HYDROXYACYL-THIOESTER DEHYDRATASE TYPE 2, MITOCHONDRIAL"/>
    <property type="match status" value="1"/>
</dbReference>
<dbReference type="PANTHER" id="PTHR43437">
    <property type="entry name" value="HYDROXYACYL-THIOESTER DEHYDRATASE TYPE 2, MITOCHONDRIAL-RELATED"/>
    <property type="match status" value="1"/>
</dbReference>
<dbReference type="Pfam" id="PF13452">
    <property type="entry name" value="FAS1_DH_region"/>
    <property type="match status" value="1"/>
</dbReference>
<dbReference type="PIRSF" id="PIRSF018072">
    <property type="entry name" value="UCP018072"/>
    <property type="match status" value="1"/>
</dbReference>
<dbReference type="SUPFAM" id="SSF54637">
    <property type="entry name" value="Thioesterase/thiol ester dehydrase-isomerase"/>
    <property type="match status" value="1"/>
</dbReference>
<evidence type="ECO:0000255" key="1">
    <source>
        <dbReference type="HAMAP-Rule" id="MF_00799"/>
    </source>
</evidence>